<comment type="function">
    <text evidence="1">NQR complex catalyzes the reduction of ubiquinone-1 to ubiquinol by two successive reactions, coupled with the transport of Na(+) ions from the cytoplasm to the periplasm. NqrA to NqrE are probably involved in the second step, the conversion of ubisemiquinone to ubiquinol.</text>
</comment>
<comment type="catalytic activity">
    <reaction evidence="1">
        <text>a ubiquinone + n Na(+)(in) + NADH + H(+) = a ubiquinol + n Na(+)(out) + NAD(+)</text>
        <dbReference type="Rhea" id="RHEA:47748"/>
        <dbReference type="Rhea" id="RHEA-COMP:9565"/>
        <dbReference type="Rhea" id="RHEA-COMP:9566"/>
        <dbReference type="ChEBI" id="CHEBI:15378"/>
        <dbReference type="ChEBI" id="CHEBI:16389"/>
        <dbReference type="ChEBI" id="CHEBI:17976"/>
        <dbReference type="ChEBI" id="CHEBI:29101"/>
        <dbReference type="ChEBI" id="CHEBI:57540"/>
        <dbReference type="ChEBI" id="CHEBI:57945"/>
        <dbReference type="EC" id="7.2.1.1"/>
    </reaction>
</comment>
<comment type="subunit">
    <text evidence="1">Composed of six subunits; NqrA, NqrB, NqrC, NqrD, NqrE and NqrF.</text>
</comment>
<comment type="similarity">
    <text evidence="1">Belongs to the NqrA family.</text>
</comment>
<organism>
    <name type="scientific">Shewanella frigidimarina (strain NCIMB 400)</name>
    <dbReference type="NCBI Taxonomy" id="318167"/>
    <lineage>
        <taxon>Bacteria</taxon>
        <taxon>Pseudomonadati</taxon>
        <taxon>Pseudomonadota</taxon>
        <taxon>Gammaproteobacteria</taxon>
        <taxon>Alteromonadales</taxon>
        <taxon>Shewanellaceae</taxon>
        <taxon>Shewanella</taxon>
    </lineage>
</organism>
<gene>
    <name evidence="1" type="primary">nqrA</name>
    <name type="ordered locus">Sfri_0949</name>
</gene>
<keyword id="KW-0406">Ion transport</keyword>
<keyword id="KW-0520">NAD</keyword>
<keyword id="KW-1185">Reference proteome</keyword>
<keyword id="KW-0915">Sodium</keyword>
<keyword id="KW-0739">Sodium transport</keyword>
<keyword id="KW-1278">Translocase</keyword>
<keyword id="KW-0813">Transport</keyword>
<keyword id="KW-0830">Ubiquinone</keyword>
<name>NQRA_SHEFN</name>
<feature type="chain" id="PRO_1000060130" description="Na(+)-translocating NADH-quinone reductase subunit A">
    <location>
        <begin position="1"/>
        <end position="444"/>
    </location>
</feature>
<proteinExistence type="inferred from homology"/>
<accession>Q086L3</accession>
<protein>
    <recommendedName>
        <fullName evidence="1">Na(+)-translocating NADH-quinone reductase subunit A</fullName>
        <shortName evidence="1">Na(+)-NQR subunit A</shortName>
        <shortName evidence="1">Na(+)-translocating NQR subunit A</shortName>
        <ecNumber evidence="1">7.2.1.1</ecNumber>
    </recommendedName>
    <alternativeName>
        <fullName evidence="1">NQR complex subunit A</fullName>
    </alternativeName>
    <alternativeName>
        <fullName evidence="1">NQR-1 subunit A</fullName>
    </alternativeName>
</protein>
<sequence>MITIKKGLELPIAGGPEQVIHNGPAIRHVATLGEEYIGLRPTMKIKVGDKVQKGQVLFEDKKNLGVKYTALASGTILEINRGARRVLQSVVIAVEGDDSVAFAQYDADKLDTLDAQVVRDNLIDSGLWTALRTRPFSKVPAVDATAAGIFVTAIDTQPLAADPVVVIAQHKEDFANGLKVLARLTEGKVYLCKAQGADIPAANAQVQEFAGKHPAGLAGTHIHHVLPASATRTVWHIGYQDVIAFGQLFTQGVLNTERVVAIGGPKAKKPRLVRTVLGASMAELTADETVGDGVRVISGSVLSGRTAVGPQAYLGRYHQQVSVLEEGDEKELFGWAMPGVDKFSITRSFLGHLSPSRLFNMTTSTGGSDRAMVPIGNYERVMPLDILPTMLLRDLLSGDFDGAVRLGALELDEEDLALCTFVCPGKYDYGSYLRDCLDTIEREG</sequence>
<evidence type="ECO:0000255" key="1">
    <source>
        <dbReference type="HAMAP-Rule" id="MF_00425"/>
    </source>
</evidence>
<dbReference type="EC" id="7.2.1.1" evidence="1"/>
<dbReference type="EMBL" id="CP000447">
    <property type="protein sequence ID" value="ABI70802.1"/>
    <property type="molecule type" value="Genomic_DNA"/>
</dbReference>
<dbReference type="RefSeq" id="WP_011636423.1">
    <property type="nucleotide sequence ID" value="NC_008345.1"/>
</dbReference>
<dbReference type="SMR" id="Q086L3"/>
<dbReference type="STRING" id="318167.Sfri_0949"/>
<dbReference type="KEGG" id="sfr:Sfri_0949"/>
<dbReference type="eggNOG" id="COG1726">
    <property type="taxonomic scope" value="Bacteria"/>
</dbReference>
<dbReference type="HOGENOM" id="CLU_046656_0_0_6"/>
<dbReference type="OrthoDB" id="9774536at2"/>
<dbReference type="Proteomes" id="UP000000684">
    <property type="component" value="Chromosome"/>
</dbReference>
<dbReference type="GO" id="GO:0016655">
    <property type="term" value="F:oxidoreductase activity, acting on NAD(P)H, quinone or similar compound as acceptor"/>
    <property type="evidence" value="ECO:0007669"/>
    <property type="project" value="UniProtKB-UniRule"/>
</dbReference>
<dbReference type="GO" id="GO:0006814">
    <property type="term" value="P:sodium ion transport"/>
    <property type="evidence" value="ECO:0007669"/>
    <property type="project" value="UniProtKB-UniRule"/>
</dbReference>
<dbReference type="HAMAP" id="MF_00425">
    <property type="entry name" value="NqrA"/>
    <property type="match status" value="1"/>
</dbReference>
<dbReference type="InterPro" id="IPR008703">
    <property type="entry name" value="NqrA"/>
</dbReference>
<dbReference type="InterPro" id="IPR056148">
    <property type="entry name" value="NQRA_2nd"/>
</dbReference>
<dbReference type="InterPro" id="IPR022615">
    <property type="entry name" value="NqrA_C_domain"/>
</dbReference>
<dbReference type="InterPro" id="IPR056147">
    <property type="entry name" value="NQRA_N"/>
</dbReference>
<dbReference type="NCBIfam" id="TIGR01936">
    <property type="entry name" value="nqrA"/>
    <property type="match status" value="1"/>
</dbReference>
<dbReference type="NCBIfam" id="NF003759">
    <property type="entry name" value="PRK05352.1-2"/>
    <property type="match status" value="1"/>
</dbReference>
<dbReference type="NCBIfam" id="NF003762">
    <property type="entry name" value="PRK05352.1-5"/>
    <property type="match status" value="1"/>
</dbReference>
<dbReference type="PANTHER" id="PTHR37839">
    <property type="entry name" value="NA(+)-TRANSLOCATING NADH-QUINONE REDUCTASE SUBUNIT A"/>
    <property type="match status" value="1"/>
</dbReference>
<dbReference type="PANTHER" id="PTHR37839:SF1">
    <property type="entry name" value="NA(+)-TRANSLOCATING NADH-QUINONE REDUCTASE SUBUNIT A"/>
    <property type="match status" value="1"/>
</dbReference>
<dbReference type="Pfam" id="PF24836">
    <property type="entry name" value="NQRA_2nd"/>
    <property type="match status" value="1"/>
</dbReference>
<dbReference type="Pfam" id="PF05896">
    <property type="entry name" value="NQRA_N"/>
    <property type="match status" value="1"/>
</dbReference>
<dbReference type="Pfam" id="PF11973">
    <property type="entry name" value="NQRA_SLBB"/>
    <property type="match status" value="1"/>
</dbReference>
<reference key="1">
    <citation type="submission" date="2006-08" db="EMBL/GenBank/DDBJ databases">
        <title>Complete sequence of Shewanella frigidimarina NCIMB 400.</title>
        <authorList>
            <consortium name="US DOE Joint Genome Institute"/>
            <person name="Copeland A."/>
            <person name="Lucas S."/>
            <person name="Lapidus A."/>
            <person name="Barry K."/>
            <person name="Detter J.C."/>
            <person name="Glavina del Rio T."/>
            <person name="Hammon N."/>
            <person name="Israni S."/>
            <person name="Dalin E."/>
            <person name="Tice H."/>
            <person name="Pitluck S."/>
            <person name="Fredrickson J.K."/>
            <person name="Kolker E."/>
            <person name="McCuel L.A."/>
            <person name="DiChristina T."/>
            <person name="Nealson K.H."/>
            <person name="Newman D."/>
            <person name="Tiedje J.M."/>
            <person name="Zhou J."/>
            <person name="Romine M.F."/>
            <person name="Culley D.E."/>
            <person name="Serres M."/>
            <person name="Chertkov O."/>
            <person name="Brettin T."/>
            <person name="Bruce D."/>
            <person name="Han C."/>
            <person name="Tapia R."/>
            <person name="Gilna P."/>
            <person name="Schmutz J."/>
            <person name="Larimer F."/>
            <person name="Land M."/>
            <person name="Hauser L."/>
            <person name="Kyrpides N."/>
            <person name="Mikhailova N."/>
            <person name="Richardson P."/>
        </authorList>
    </citation>
    <scope>NUCLEOTIDE SEQUENCE [LARGE SCALE GENOMIC DNA]</scope>
    <source>
        <strain>NCIMB 400</strain>
    </source>
</reference>